<reference key="1">
    <citation type="submission" date="2008-06" db="EMBL/GenBank/DDBJ databases">
        <title>Complete sequence of Chloroherpeton thalassium ATCC 35110.</title>
        <authorList>
            <consortium name="US DOE Joint Genome Institute"/>
            <person name="Lucas S."/>
            <person name="Copeland A."/>
            <person name="Lapidus A."/>
            <person name="Glavina del Rio T."/>
            <person name="Dalin E."/>
            <person name="Tice H."/>
            <person name="Bruce D."/>
            <person name="Goodwin L."/>
            <person name="Pitluck S."/>
            <person name="Schmutz J."/>
            <person name="Larimer F."/>
            <person name="Land M."/>
            <person name="Hauser L."/>
            <person name="Kyrpides N."/>
            <person name="Mikhailova N."/>
            <person name="Liu Z."/>
            <person name="Li T."/>
            <person name="Zhao F."/>
            <person name="Overmann J."/>
            <person name="Bryant D.A."/>
            <person name="Richardson P."/>
        </authorList>
    </citation>
    <scope>NUCLEOTIDE SEQUENCE [LARGE SCALE GENOMIC DNA]</scope>
    <source>
        <strain>ATCC 35110 / GB-78</strain>
    </source>
</reference>
<accession>B3QX21</accession>
<keyword id="KW-0021">Allosteric enzyme</keyword>
<keyword id="KW-0963">Cytoplasm</keyword>
<keyword id="KW-0520">NAD</keyword>
<keyword id="KW-0560">Oxidoreductase</keyword>
<keyword id="KW-0597">Phosphoprotein</keyword>
<keyword id="KW-1185">Reference proteome</keyword>
<evidence type="ECO:0000255" key="1">
    <source>
        <dbReference type="HAMAP-Rule" id="MF_00488"/>
    </source>
</evidence>
<comment type="function">
    <text evidence="1">Catalyzes the conversion of lactate to pyruvate.</text>
</comment>
<comment type="catalytic activity">
    <reaction evidence="1">
        <text>(S)-lactate + NAD(+) = pyruvate + NADH + H(+)</text>
        <dbReference type="Rhea" id="RHEA:23444"/>
        <dbReference type="ChEBI" id="CHEBI:15361"/>
        <dbReference type="ChEBI" id="CHEBI:15378"/>
        <dbReference type="ChEBI" id="CHEBI:16651"/>
        <dbReference type="ChEBI" id="CHEBI:57540"/>
        <dbReference type="ChEBI" id="CHEBI:57945"/>
        <dbReference type="EC" id="1.1.1.27"/>
    </reaction>
</comment>
<comment type="activity regulation">
    <text evidence="1">Allosterically activated by fructose 1,6-bisphosphate (FBP).</text>
</comment>
<comment type="pathway">
    <text evidence="1">Fermentation; pyruvate fermentation to lactate; (S)-lactate from pyruvate: step 1/1.</text>
</comment>
<comment type="subunit">
    <text evidence="1">Homotetramer.</text>
</comment>
<comment type="subcellular location">
    <subcellularLocation>
        <location evidence="1">Cytoplasm</location>
    </subcellularLocation>
</comment>
<comment type="similarity">
    <text evidence="1">Belongs to the LDH/MDH superfamily. LDH family.</text>
</comment>
<gene>
    <name evidence="1" type="primary">ldh</name>
    <name type="ordered locus">Ctha_2381</name>
</gene>
<dbReference type="EC" id="1.1.1.27" evidence="1"/>
<dbReference type="EMBL" id="CP001100">
    <property type="protein sequence ID" value="ACF14831.1"/>
    <property type="molecule type" value="Genomic_DNA"/>
</dbReference>
<dbReference type="RefSeq" id="WP_012500913.1">
    <property type="nucleotide sequence ID" value="NC_011026.1"/>
</dbReference>
<dbReference type="SMR" id="B3QX21"/>
<dbReference type="STRING" id="517418.Ctha_2381"/>
<dbReference type="KEGG" id="cts:Ctha_2381"/>
<dbReference type="eggNOG" id="COG0039">
    <property type="taxonomic scope" value="Bacteria"/>
</dbReference>
<dbReference type="HOGENOM" id="CLU_045401_1_1_10"/>
<dbReference type="OrthoDB" id="9802969at2"/>
<dbReference type="UniPathway" id="UPA00554">
    <property type="reaction ID" value="UER00611"/>
</dbReference>
<dbReference type="Proteomes" id="UP000001208">
    <property type="component" value="Chromosome"/>
</dbReference>
<dbReference type="GO" id="GO:0005737">
    <property type="term" value="C:cytoplasm"/>
    <property type="evidence" value="ECO:0007669"/>
    <property type="project" value="UniProtKB-SubCell"/>
</dbReference>
<dbReference type="GO" id="GO:0004459">
    <property type="term" value="F:L-lactate dehydrogenase activity"/>
    <property type="evidence" value="ECO:0007669"/>
    <property type="project" value="UniProtKB-UniRule"/>
</dbReference>
<dbReference type="GO" id="GO:0006096">
    <property type="term" value="P:glycolytic process"/>
    <property type="evidence" value="ECO:0007669"/>
    <property type="project" value="UniProtKB-UniRule"/>
</dbReference>
<dbReference type="GO" id="GO:0006089">
    <property type="term" value="P:lactate metabolic process"/>
    <property type="evidence" value="ECO:0007669"/>
    <property type="project" value="TreeGrafter"/>
</dbReference>
<dbReference type="CDD" id="cd05292">
    <property type="entry name" value="LDH_2"/>
    <property type="match status" value="1"/>
</dbReference>
<dbReference type="Gene3D" id="3.90.110.10">
    <property type="entry name" value="Lactate dehydrogenase/glycoside hydrolase, family 4, C-terminal"/>
    <property type="match status" value="1"/>
</dbReference>
<dbReference type="Gene3D" id="3.40.50.720">
    <property type="entry name" value="NAD(P)-binding Rossmann-like Domain"/>
    <property type="match status" value="1"/>
</dbReference>
<dbReference type="HAMAP" id="MF_00488">
    <property type="entry name" value="Lactate_dehydrog"/>
    <property type="match status" value="1"/>
</dbReference>
<dbReference type="InterPro" id="IPR001557">
    <property type="entry name" value="L-lactate/malate_DH"/>
</dbReference>
<dbReference type="InterPro" id="IPR011304">
    <property type="entry name" value="L-lactate_DH"/>
</dbReference>
<dbReference type="InterPro" id="IPR018177">
    <property type="entry name" value="L-lactate_DH_AS"/>
</dbReference>
<dbReference type="InterPro" id="IPR022383">
    <property type="entry name" value="Lactate/malate_DH_C"/>
</dbReference>
<dbReference type="InterPro" id="IPR001236">
    <property type="entry name" value="Lactate/malate_DH_N"/>
</dbReference>
<dbReference type="InterPro" id="IPR015955">
    <property type="entry name" value="Lactate_DH/Glyco_Ohase_4_C"/>
</dbReference>
<dbReference type="InterPro" id="IPR036291">
    <property type="entry name" value="NAD(P)-bd_dom_sf"/>
</dbReference>
<dbReference type="NCBIfam" id="TIGR01771">
    <property type="entry name" value="L-LDH-NAD"/>
    <property type="match status" value="1"/>
</dbReference>
<dbReference type="PANTHER" id="PTHR43128">
    <property type="entry name" value="L-2-HYDROXYCARBOXYLATE DEHYDROGENASE (NAD(P)(+))"/>
    <property type="match status" value="1"/>
</dbReference>
<dbReference type="PANTHER" id="PTHR43128:SF16">
    <property type="entry name" value="L-LACTATE DEHYDROGENASE"/>
    <property type="match status" value="1"/>
</dbReference>
<dbReference type="Pfam" id="PF02866">
    <property type="entry name" value="Ldh_1_C"/>
    <property type="match status" value="1"/>
</dbReference>
<dbReference type="Pfam" id="PF00056">
    <property type="entry name" value="Ldh_1_N"/>
    <property type="match status" value="1"/>
</dbReference>
<dbReference type="PIRSF" id="PIRSF000102">
    <property type="entry name" value="Lac_mal_DH"/>
    <property type="match status" value="1"/>
</dbReference>
<dbReference type="PRINTS" id="PR00086">
    <property type="entry name" value="LLDHDRGNASE"/>
</dbReference>
<dbReference type="SUPFAM" id="SSF56327">
    <property type="entry name" value="LDH C-terminal domain-like"/>
    <property type="match status" value="1"/>
</dbReference>
<dbReference type="SUPFAM" id="SSF51735">
    <property type="entry name" value="NAD(P)-binding Rossmann-fold domains"/>
    <property type="match status" value="1"/>
</dbReference>
<dbReference type="PROSITE" id="PS00064">
    <property type="entry name" value="L_LDH"/>
    <property type="match status" value="1"/>
</dbReference>
<sequence length="305" mass="32270">MKVGIIGAGFVGATAAFAMAMRGSCSEIVIVDADNAKAKAQASDIEHAVPFSFAMTVRDGDFQDLKGAKVIIISAGVNQKPGETRLQLLERNANIFRDIVPKVVAIESNAVIVVATNPVDILTSLTEQLAGLPEGQVMGSGTTLDTARFRALIGNELGVDPQHVHAYVIGEHGDSEVFAWSSANVAGLSIPSFCKARQVRWNEEIQSQIADNVRKAAYHIIEGKGATYYGIGAVLARISEALIRNHRAVLTVSANIPEFGVALSLPRLVSGKGIDGLIGVQTNDEERAALERSASVLREALSAIS</sequence>
<feature type="chain" id="PRO_1000126154" description="L-lactate dehydrogenase">
    <location>
        <begin position="1"/>
        <end position="305"/>
    </location>
</feature>
<feature type="active site" description="Proton acceptor" evidence="1">
    <location>
        <position position="172"/>
    </location>
</feature>
<feature type="binding site" evidence="1">
    <location>
        <position position="11"/>
    </location>
    <ligand>
        <name>NAD(+)</name>
        <dbReference type="ChEBI" id="CHEBI:57540"/>
    </ligand>
</feature>
<feature type="binding site" evidence="1">
    <location>
        <position position="32"/>
    </location>
    <ligand>
        <name>NAD(+)</name>
        <dbReference type="ChEBI" id="CHEBI:57540"/>
    </ligand>
</feature>
<feature type="binding site" evidence="1">
    <location>
        <position position="37"/>
    </location>
    <ligand>
        <name>NAD(+)</name>
        <dbReference type="ChEBI" id="CHEBI:57540"/>
    </ligand>
</feature>
<feature type="binding site" evidence="1">
    <location>
        <begin position="76"/>
        <end position="77"/>
    </location>
    <ligand>
        <name>NAD(+)</name>
        <dbReference type="ChEBI" id="CHEBI:57540"/>
    </ligand>
</feature>
<feature type="binding site" evidence="1">
    <location>
        <position position="79"/>
    </location>
    <ligand>
        <name>substrate</name>
    </ligand>
</feature>
<feature type="binding site" evidence="1">
    <location>
        <position position="85"/>
    </location>
    <ligand>
        <name>substrate</name>
    </ligand>
</feature>
<feature type="binding site" evidence="1">
    <location>
        <begin position="115"/>
        <end position="117"/>
    </location>
    <ligand>
        <name>NAD(+)</name>
        <dbReference type="ChEBI" id="CHEBI:57540"/>
    </ligand>
</feature>
<feature type="binding site" evidence="1">
    <location>
        <begin position="117"/>
        <end position="120"/>
    </location>
    <ligand>
        <name>substrate</name>
    </ligand>
</feature>
<feature type="binding site" evidence="1">
    <location>
        <position position="140"/>
    </location>
    <ligand>
        <name>NAD(+)</name>
        <dbReference type="ChEBI" id="CHEBI:57540"/>
    </ligand>
</feature>
<feature type="binding site" evidence="1">
    <location>
        <begin position="145"/>
        <end position="148"/>
    </location>
    <ligand>
        <name>substrate</name>
    </ligand>
</feature>
<feature type="binding site" evidence="1">
    <location>
        <position position="150"/>
    </location>
    <ligand>
        <name>beta-D-fructose 1,6-bisphosphate</name>
        <dbReference type="ChEBI" id="CHEBI:32966"/>
        <note>allosteric activator</note>
    </ligand>
</feature>
<feature type="binding site" evidence="1">
    <location>
        <position position="165"/>
    </location>
    <ligand>
        <name>beta-D-fructose 1,6-bisphosphate</name>
        <dbReference type="ChEBI" id="CHEBI:32966"/>
        <note>allosteric activator</note>
    </ligand>
</feature>
<feature type="binding site" evidence="1">
    <location>
        <position position="227"/>
    </location>
    <ligand>
        <name>substrate</name>
    </ligand>
</feature>
<feature type="modified residue" description="Phosphotyrosine" evidence="1">
    <location>
        <position position="218"/>
    </location>
</feature>
<proteinExistence type="inferred from homology"/>
<protein>
    <recommendedName>
        <fullName evidence="1">L-lactate dehydrogenase</fullName>
        <shortName evidence="1">L-LDH</shortName>
        <ecNumber evidence="1">1.1.1.27</ecNumber>
    </recommendedName>
</protein>
<organism>
    <name type="scientific">Chloroherpeton thalassium (strain ATCC 35110 / GB-78)</name>
    <dbReference type="NCBI Taxonomy" id="517418"/>
    <lineage>
        <taxon>Bacteria</taxon>
        <taxon>Pseudomonadati</taxon>
        <taxon>Chlorobiota</taxon>
        <taxon>Chlorobiia</taxon>
        <taxon>Chlorobiales</taxon>
        <taxon>Chloroherpetonaceae</taxon>
        <taxon>Chloroherpeton</taxon>
    </lineage>
</organism>
<name>LDH_CHLT3</name>